<protein>
    <recommendedName>
        <fullName>Growth factor receptor-bound protein 2</fullName>
    </recommendedName>
    <alternativeName>
        <fullName>Adapter protein GRB2</fullName>
    </alternativeName>
    <alternativeName>
        <fullName>SH2/SH3 adapter GRB2</fullName>
    </alternativeName>
</protein>
<feature type="chain" id="PRO_0000088205" description="Growth factor receptor-bound protein 2">
    <location>
        <begin position="1"/>
        <end position="229"/>
    </location>
</feature>
<feature type="domain" description="SH3 1" evidence="4">
    <location>
        <begin position="1"/>
        <end position="58"/>
    </location>
</feature>
<feature type="domain" description="SH2" evidence="3">
    <location>
        <begin position="60"/>
        <end position="171"/>
    </location>
</feature>
<feature type="domain" description="SH3 2" evidence="4">
    <location>
        <begin position="168"/>
        <end position="227"/>
    </location>
</feature>
<evidence type="ECO:0000250" key="1"/>
<evidence type="ECO:0000250" key="2">
    <source>
        <dbReference type="UniProtKB" id="P87379"/>
    </source>
</evidence>
<evidence type="ECO:0000255" key="3">
    <source>
        <dbReference type="PROSITE-ProRule" id="PRU00191"/>
    </source>
</evidence>
<evidence type="ECO:0000255" key="4">
    <source>
        <dbReference type="PROSITE-ProRule" id="PRU00192"/>
    </source>
</evidence>
<evidence type="ECO:0000312" key="5">
    <source>
        <dbReference type="EMBL" id="AAH81338.1"/>
    </source>
</evidence>
<dbReference type="EMBL" id="BC081338">
    <property type="protein sequence ID" value="AAH81338.1"/>
    <property type="molecule type" value="mRNA"/>
</dbReference>
<dbReference type="RefSeq" id="NP_001008130.1">
    <property type="nucleotide sequence ID" value="NM_001008129.1"/>
</dbReference>
<dbReference type="RefSeq" id="XP_012827139.1">
    <property type="nucleotide sequence ID" value="XM_012971685.3"/>
</dbReference>
<dbReference type="RefSeq" id="XP_012827140.1">
    <property type="nucleotide sequence ID" value="XM_012971686.3"/>
</dbReference>
<dbReference type="RefSeq" id="XP_012827141.1">
    <property type="nucleotide sequence ID" value="XM_012971687.2"/>
</dbReference>
<dbReference type="RefSeq" id="XP_012827142.1">
    <property type="nucleotide sequence ID" value="XM_012971688.3"/>
</dbReference>
<dbReference type="SMR" id="Q66II3"/>
<dbReference type="FunCoup" id="Q66II3">
    <property type="interactions" value="4164"/>
</dbReference>
<dbReference type="STRING" id="8364.ENSXETP00000047276"/>
<dbReference type="PaxDb" id="8364-ENSXETP00000027387"/>
<dbReference type="DNASU" id="493492"/>
<dbReference type="GeneID" id="493492"/>
<dbReference type="KEGG" id="xtr:493492"/>
<dbReference type="AGR" id="Xenbase:XB-GENE-6070000"/>
<dbReference type="CTD" id="2885"/>
<dbReference type="Xenbase" id="XB-GENE-6070000">
    <property type="gene designation" value="grb2"/>
</dbReference>
<dbReference type="eggNOG" id="KOG3601">
    <property type="taxonomic scope" value="Eukaryota"/>
</dbReference>
<dbReference type="HOGENOM" id="CLU_073617_1_0_1"/>
<dbReference type="InParanoid" id="Q66II3"/>
<dbReference type="OMA" id="YVCPYNS"/>
<dbReference type="OrthoDB" id="10255964at2759"/>
<dbReference type="PhylomeDB" id="Q66II3"/>
<dbReference type="TreeFam" id="TF354288"/>
<dbReference type="Reactome" id="R-XTR-109704">
    <property type="pathway name" value="PI3K Cascade"/>
</dbReference>
<dbReference type="Reactome" id="R-XTR-112412">
    <property type="pathway name" value="SOS-mediated signalling"/>
</dbReference>
<dbReference type="Reactome" id="R-XTR-1250347">
    <property type="pathway name" value="SHC1 events in ERBB4 signaling"/>
</dbReference>
<dbReference type="Reactome" id="R-XTR-1257604">
    <property type="pathway name" value="PIP3 activates AKT signaling"/>
</dbReference>
<dbReference type="Reactome" id="R-XTR-1295596">
    <property type="pathway name" value="Spry regulation of FGF signaling"/>
</dbReference>
<dbReference type="Reactome" id="R-XTR-1433557">
    <property type="pathway name" value="Signaling by SCF-KIT"/>
</dbReference>
<dbReference type="Reactome" id="R-XTR-167044">
    <property type="pathway name" value="Signalling to RAS"/>
</dbReference>
<dbReference type="Reactome" id="R-XTR-179812">
    <property type="pathway name" value="GRB2 events in EGFR signaling"/>
</dbReference>
<dbReference type="Reactome" id="R-XTR-180292">
    <property type="pathway name" value="GAB1 signalosome"/>
</dbReference>
<dbReference type="Reactome" id="R-XTR-180336">
    <property type="pathway name" value="SHC1 events in EGFR signaling"/>
</dbReference>
<dbReference type="Reactome" id="R-XTR-182971">
    <property type="pathway name" value="EGFR downregulation"/>
</dbReference>
<dbReference type="Reactome" id="R-XTR-186763">
    <property type="pathway name" value="Downstream signal transduction"/>
</dbReference>
<dbReference type="Reactome" id="R-XTR-1963640">
    <property type="pathway name" value="GRB2 events in ERBB2 signaling"/>
</dbReference>
<dbReference type="Reactome" id="R-XTR-1963642">
    <property type="pathway name" value="PI3K events in ERBB2 signaling"/>
</dbReference>
<dbReference type="Reactome" id="R-XTR-210993">
    <property type="pathway name" value="Tie2 Signaling"/>
</dbReference>
<dbReference type="Reactome" id="R-XTR-2179392">
    <property type="pathway name" value="EGFR Transactivation by Gastrin"/>
</dbReference>
<dbReference type="Reactome" id="R-XTR-2424491">
    <property type="pathway name" value="DAP12 signaling"/>
</dbReference>
<dbReference type="Reactome" id="R-XTR-2730905">
    <property type="pathway name" value="Role of LAT2/NTAL/LAB on calcium mobilization"/>
</dbReference>
<dbReference type="Reactome" id="R-XTR-2871796">
    <property type="pathway name" value="FCERI mediated MAPK activation"/>
</dbReference>
<dbReference type="Reactome" id="R-XTR-2871809">
    <property type="pathway name" value="FCERI mediated Ca+2 mobilization"/>
</dbReference>
<dbReference type="Reactome" id="R-XTR-375165">
    <property type="pathway name" value="NCAM signaling for neurite out-growth"/>
</dbReference>
<dbReference type="Reactome" id="R-XTR-389359">
    <property type="pathway name" value="CD28 dependent Vav1 pathway"/>
</dbReference>
<dbReference type="Reactome" id="R-XTR-5654688">
    <property type="pathway name" value="SHC-mediated cascade:FGFR1"/>
</dbReference>
<dbReference type="Reactome" id="R-XTR-5654689">
    <property type="pathway name" value="PI-3K cascade:FGFR1"/>
</dbReference>
<dbReference type="Reactome" id="R-XTR-5654693">
    <property type="pathway name" value="FRS-mediated FGFR1 signaling"/>
</dbReference>
<dbReference type="Reactome" id="R-XTR-5654695">
    <property type="pathway name" value="PI-3K cascade:FGFR2"/>
</dbReference>
<dbReference type="Reactome" id="R-XTR-5654699">
    <property type="pathway name" value="SHC-mediated cascade:FGFR2"/>
</dbReference>
<dbReference type="Reactome" id="R-XTR-5654700">
    <property type="pathway name" value="FRS-mediated FGFR2 signaling"/>
</dbReference>
<dbReference type="Reactome" id="R-XTR-5654704">
    <property type="pathway name" value="SHC-mediated cascade:FGFR3"/>
</dbReference>
<dbReference type="Reactome" id="R-XTR-5654706">
    <property type="pathway name" value="FRS-mediated FGFR3 signaling"/>
</dbReference>
<dbReference type="Reactome" id="R-XTR-5654710">
    <property type="pathway name" value="PI-3K cascade:FGFR3"/>
</dbReference>
<dbReference type="Reactome" id="R-XTR-5654712">
    <property type="pathway name" value="FRS-mediated FGFR4 signaling"/>
</dbReference>
<dbReference type="Reactome" id="R-XTR-5654719">
    <property type="pathway name" value="SHC-mediated cascade:FGFR4"/>
</dbReference>
<dbReference type="Reactome" id="R-XTR-5654720">
    <property type="pathway name" value="PI-3K cascade:FGFR4"/>
</dbReference>
<dbReference type="Reactome" id="R-XTR-5654726">
    <property type="pathway name" value="Negative regulation of FGFR1 signaling"/>
</dbReference>
<dbReference type="Reactome" id="R-XTR-5654733">
    <property type="pathway name" value="Negative regulation of FGFR4 signaling"/>
</dbReference>
<dbReference type="Reactome" id="R-XTR-5673001">
    <property type="pathway name" value="RAF/MAP kinase cascade"/>
</dbReference>
<dbReference type="Reactome" id="R-XTR-6807004">
    <property type="pathway name" value="Negative regulation of MET activity"/>
</dbReference>
<dbReference type="Reactome" id="R-XTR-6811558">
    <property type="pathway name" value="PI5P, PP2A and IER3 Regulate PI3K/AKT Signaling"/>
</dbReference>
<dbReference type="Reactome" id="R-XTR-74749">
    <property type="pathway name" value="Signal attenuation"/>
</dbReference>
<dbReference type="Reactome" id="R-XTR-74751">
    <property type="pathway name" value="Insulin receptor signalling cascade"/>
</dbReference>
<dbReference type="Reactome" id="R-XTR-8851805">
    <property type="pathway name" value="MET activates RAS signaling"/>
</dbReference>
<dbReference type="Reactome" id="R-XTR-8851907">
    <property type="pathway name" value="MET activates PI3K/AKT signaling"/>
</dbReference>
<dbReference type="Reactome" id="R-XTR-8853659">
    <property type="pathway name" value="RET signaling"/>
</dbReference>
<dbReference type="Reactome" id="R-XTR-8865999">
    <property type="pathway name" value="MET activates PTPN11"/>
</dbReference>
<dbReference type="Reactome" id="R-XTR-8875555">
    <property type="pathway name" value="MET activates RAP1 and RAC1"/>
</dbReference>
<dbReference type="Reactome" id="R-XTR-8875656">
    <property type="pathway name" value="MET receptor recycling"/>
</dbReference>
<dbReference type="Reactome" id="R-XTR-9013420">
    <property type="pathway name" value="RHOU GTPase cycle"/>
</dbReference>
<dbReference type="Reactome" id="R-XTR-9027284">
    <property type="pathway name" value="Erythropoietin activates RAS"/>
</dbReference>
<dbReference type="Reactome" id="R-XTR-9028731">
    <property type="pathway name" value="Activated NTRK2 signals through FRS2 and FRS3"/>
</dbReference>
<dbReference type="Reactome" id="R-XTR-912631">
    <property type="pathway name" value="Regulation of signaling by CBL"/>
</dbReference>
<dbReference type="Reactome" id="R-XTR-9607240">
    <property type="pathway name" value="FLT3 Signaling"/>
</dbReference>
<dbReference type="Reactome" id="R-XTR-9842663">
    <property type="pathway name" value="Signaling by LTK"/>
</dbReference>
<dbReference type="Proteomes" id="UP000008143">
    <property type="component" value="Chromosome 10"/>
</dbReference>
<dbReference type="Bgee" id="ENSXETG00000012520">
    <property type="expression patterns" value="Expressed in brain and 14 other cell types or tissues"/>
</dbReference>
<dbReference type="GO" id="GO:0005737">
    <property type="term" value="C:cytoplasm"/>
    <property type="evidence" value="ECO:0000250"/>
    <property type="project" value="UniProtKB"/>
</dbReference>
<dbReference type="GO" id="GO:0005768">
    <property type="term" value="C:endosome"/>
    <property type="evidence" value="ECO:0000250"/>
    <property type="project" value="UniProtKB"/>
</dbReference>
<dbReference type="GO" id="GO:0005794">
    <property type="term" value="C:Golgi apparatus"/>
    <property type="evidence" value="ECO:0007669"/>
    <property type="project" value="UniProtKB-SubCell"/>
</dbReference>
<dbReference type="GO" id="GO:0005634">
    <property type="term" value="C:nucleus"/>
    <property type="evidence" value="ECO:0000250"/>
    <property type="project" value="UniProtKB"/>
</dbReference>
<dbReference type="GO" id="GO:0005154">
    <property type="term" value="F:epidermal growth factor receptor binding"/>
    <property type="evidence" value="ECO:0000250"/>
    <property type="project" value="UniProtKB"/>
</dbReference>
<dbReference type="GO" id="GO:0043560">
    <property type="term" value="F:insulin receptor substrate binding"/>
    <property type="evidence" value="ECO:0000250"/>
    <property type="project" value="UniProtKB"/>
</dbReference>
<dbReference type="GO" id="GO:0008286">
    <property type="term" value="P:insulin receptor signaling pathway"/>
    <property type="evidence" value="ECO:0000250"/>
    <property type="project" value="UniProtKB"/>
</dbReference>
<dbReference type="GO" id="GO:0051321">
    <property type="term" value="P:meiotic cell cycle"/>
    <property type="evidence" value="ECO:0007669"/>
    <property type="project" value="UniProtKB-KW"/>
</dbReference>
<dbReference type="CDD" id="cd09941">
    <property type="entry name" value="SH2_Grb2_like"/>
    <property type="match status" value="1"/>
</dbReference>
<dbReference type="CDD" id="cd11949">
    <property type="entry name" value="SH3_GRB2_C"/>
    <property type="match status" value="1"/>
</dbReference>
<dbReference type="CDD" id="cd11946">
    <property type="entry name" value="SH3_GRB2_N"/>
    <property type="match status" value="1"/>
</dbReference>
<dbReference type="FunFam" id="2.30.30.40:FF:000067">
    <property type="entry name" value="Growth factor receptor-bound protein 2"/>
    <property type="match status" value="1"/>
</dbReference>
<dbReference type="FunFam" id="2.30.30.40:FF:000076">
    <property type="entry name" value="Growth factor receptor-bound protein 2"/>
    <property type="match status" value="1"/>
</dbReference>
<dbReference type="FunFam" id="3.30.505.10:FF:000022">
    <property type="entry name" value="Growth factor receptor-bound protein 2"/>
    <property type="match status" value="1"/>
</dbReference>
<dbReference type="Gene3D" id="3.30.505.10">
    <property type="entry name" value="SH2 domain"/>
    <property type="match status" value="1"/>
</dbReference>
<dbReference type="Gene3D" id="2.30.30.40">
    <property type="entry name" value="SH3 Domains"/>
    <property type="match status" value="2"/>
</dbReference>
<dbReference type="InterPro" id="IPR043539">
    <property type="entry name" value="Grb2-like"/>
</dbReference>
<dbReference type="InterPro" id="IPR035643">
    <property type="entry name" value="GRB2_C_SH3"/>
</dbReference>
<dbReference type="InterPro" id="IPR035641">
    <property type="entry name" value="GRB2_N_SH3"/>
</dbReference>
<dbReference type="InterPro" id="IPR000980">
    <property type="entry name" value="SH2"/>
</dbReference>
<dbReference type="InterPro" id="IPR036860">
    <property type="entry name" value="SH2_dom_sf"/>
</dbReference>
<dbReference type="InterPro" id="IPR036028">
    <property type="entry name" value="SH3-like_dom_sf"/>
</dbReference>
<dbReference type="InterPro" id="IPR001452">
    <property type="entry name" value="SH3_domain"/>
</dbReference>
<dbReference type="PANTHER" id="PTHR46037">
    <property type="entry name" value="PROTEIN ENHANCER OF SEVENLESS 2B"/>
    <property type="match status" value="1"/>
</dbReference>
<dbReference type="Pfam" id="PF00017">
    <property type="entry name" value="SH2"/>
    <property type="match status" value="1"/>
</dbReference>
<dbReference type="Pfam" id="PF00018">
    <property type="entry name" value="SH3_1"/>
    <property type="match status" value="2"/>
</dbReference>
<dbReference type="PRINTS" id="PR00499">
    <property type="entry name" value="P67PHOX"/>
</dbReference>
<dbReference type="PRINTS" id="PR00401">
    <property type="entry name" value="SH2DOMAIN"/>
</dbReference>
<dbReference type="PRINTS" id="PR00452">
    <property type="entry name" value="SH3DOMAIN"/>
</dbReference>
<dbReference type="SMART" id="SM00252">
    <property type="entry name" value="SH2"/>
    <property type="match status" value="1"/>
</dbReference>
<dbReference type="SMART" id="SM00326">
    <property type="entry name" value="SH3"/>
    <property type="match status" value="2"/>
</dbReference>
<dbReference type="SUPFAM" id="SSF55550">
    <property type="entry name" value="SH2 domain"/>
    <property type="match status" value="1"/>
</dbReference>
<dbReference type="SUPFAM" id="SSF50044">
    <property type="entry name" value="SH3-domain"/>
    <property type="match status" value="2"/>
</dbReference>
<dbReference type="PROSITE" id="PS50001">
    <property type="entry name" value="SH2"/>
    <property type="match status" value="1"/>
</dbReference>
<dbReference type="PROSITE" id="PS50002">
    <property type="entry name" value="SH3"/>
    <property type="match status" value="2"/>
</dbReference>
<organism>
    <name type="scientific">Xenopus tropicalis</name>
    <name type="common">Western clawed frog</name>
    <name type="synonym">Silurana tropicalis</name>
    <dbReference type="NCBI Taxonomy" id="8364"/>
    <lineage>
        <taxon>Eukaryota</taxon>
        <taxon>Metazoa</taxon>
        <taxon>Chordata</taxon>
        <taxon>Craniata</taxon>
        <taxon>Vertebrata</taxon>
        <taxon>Euteleostomi</taxon>
        <taxon>Amphibia</taxon>
        <taxon>Batrachia</taxon>
        <taxon>Anura</taxon>
        <taxon>Pipoidea</taxon>
        <taxon>Pipidae</taxon>
        <taxon>Xenopodinae</taxon>
        <taxon>Xenopus</taxon>
        <taxon>Silurana</taxon>
    </lineage>
</organism>
<keyword id="KW-0963">Cytoplasm</keyword>
<keyword id="KW-0217">Developmental protein</keyword>
<keyword id="KW-0967">Endosome</keyword>
<keyword id="KW-0333">Golgi apparatus</keyword>
<keyword id="KW-0469">Meiosis</keyword>
<keyword id="KW-0539">Nucleus</keyword>
<keyword id="KW-1185">Reference proteome</keyword>
<keyword id="KW-0677">Repeat</keyword>
<keyword id="KW-0727">SH2 domain</keyword>
<keyword id="KW-0728">SH3 domain</keyword>
<name>GRB2_XENTR</name>
<reference evidence="5" key="1">
    <citation type="submission" date="2004-08" db="EMBL/GenBank/DDBJ databases">
        <authorList>
            <consortium name="NIH - Xenopus Gene Collection (XGC) project"/>
        </authorList>
    </citation>
    <scope>NUCLEOTIDE SEQUENCE [LARGE SCALE MRNA]</scope>
    <source>
        <tissue evidence="5">Embryo</tissue>
    </source>
</reference>
<accession>Q66II3</accession>
<gene>
    <name evidence="5" type="primary">grb2</name>
</gene>
<sequence length="229" mass="26422">MEAVAKYDFKATADDELSFKRGDILKVLNEECDQNWYKAELNGKDGFIPKNYIEMKPHPWFFGKIPRAKAEEMLGKQRHDGAFLIRESESAPGDFSLSVKFGNDVQHFKVLRDGAGKYFLWVVKFNSLNELVDYHRSTSVSRNQQIFLRDIEQVPQVHGGDRATNLLQQPTYVQALFDFDPQEDGELGFRRGDFIQVVDNSDPNWWKGTCLGQTGMFPRNYVTPVNRNM</sequence>
<proteinExistence type="evidence at transcript level"/>
<comment type="function">
    <text evidence="1">Adapter protein that provides a critical link between cell surface growth factor receptors and the Ras signaling pathway. Promotes meiotic reinitiation during oocyte maturation.</text>
</comment>
<comment type="subcellular location">
    <subcellularLocation>
        <location evidence="1">Nucleus</location>
    </subcellularLocation>
    <subcellularLocation>
        <location evidence="1">Cytoplasm</location>
    </subcellularLocation>
    <subcellularLocation>
        <location evidence="1">Endosome</location>
    </subcellularLocation>
    <subcellularLocation>
        <location evidence="1">Golgi apparatus</location>
    </subcellularLocation>
</comment>
<comment type="domain">
    <text evidence="2">The two SH3 domains and the SH2 domain are necessary for the reinitiation of oocyte meiosis.</text>
</comment>